<dbReference type="EMBL" id="AE016823">
    <property type="protein sequence ID" value="AAS70592.1"/>
    <property type="molecule type" value="Genomic_DNA"/>
</dbReference>
<dbReference type="RefSeq" id="WP_000762669.1">
    <property type="nucleotide sequence ID" value="NC_005823.1"/>
</dbReference>
<dbReference type="SMR" id="Q72QU2"/>
<dbReference type="GeneID" id="61141909"/>
<dbReference type="KEGG" id="lic:LIC_12017"/>
<dbReference type="HOGENOM" id="CLU_005070_4_0_12"/>
<dbReference type="Proteomes" id="UP000007037">
    <property type="component" value="Chromosome I"/>
</dbReference>
<dbReference type="GO" id="GO:0005737">
    <property type="term" value="C:cytoplasm"/>
    <property type="evidence" value="ECO:0007669"/>
    <property type="project" value="UniProtKB-SubCell"/>
</dbReference>
<dbReference type="GO" id="GO:0005524">
    <property type="term" value="F:ATP binding"/>
    <property type="evidence" value="ECO:0007669"/>
    <property type="project" value="UniProtKB-KW"/>
</dbReference>
<dbReference type="GO" id="GO:0016887">
    <property type="term" value="F:ATP hydrolysis activity"/>
    <property type="evidence" value="ECO:0007669"/>
    <property type="project" value="InterPro"/>
</dbReference>
<dbReference type="GO" id="GO:0034605">
    <property type="term" value="P:cellular response to heat"/>
    <property type="evidence" value="ECO:0007669"/>
    <property type="project" value="TreeGrafter"/>
</dbReference>
<dbReference type="GO" id="GO:0042026">
    <property type="term" value="P:protein refolding"/>
    <property type="evidence" value="ECO:0007669"/>
    <property type="project" value="InterPro"/>
</dbReference>
<dbReference type="CDD" id="cd00009">
    <property type="entry name" value="AAA"/>
    <property type="match status" value="1"/>
</dbReference>
<dbReference type="CDD" id="cd19499">
    <property type="entry name" value="RecA-like_ClpB_Hsp104-like"/>
    <property type="match status" value="1"/>
</dbReference>
<dbReference type="FunFam" id="3.40.50.300:FF:000120">
    <property type="entry name" value="ATP-dependent chaperone ClpB"/>
    <property type="match status" value="1"/>
</dbReference>
<dbReference type="FunFam" id="3.40.50.300:FF:000025">
    <property type="entry name" value="ATP-dependent Clp protease subunit"/>
    <property type="match status" value="1"/>
</dbReference>
<dbReference type="FunFam" id="3.40.50.300:FF:000010">
    <property type="entry name" value="Chaperone clpB 1, putative"/>
    <property type="match status" value="1"/>
</dbReference>
<dbReference type="Gene3D" id="1.10.8.60">
    <property type="match status" value="1"/>
</dbReference>
<dbReference type="Gene3D" id="1.10.1780.10">
    <property type="entry name" value="Clp, N-terminal domain"/>
    <property type="match status" value="1"/>
</dbReference>
<dbReference type="Gene3D" id="3.40.50.300">
    <property type="entry name" value="P-loop containing nucleotide triphosphate hydrolases"/>
    <property type="match status" value="3"/>
</dbReference>
<dbReference type="InterPro" id="IPR003593">
    <property type="entry name" value="AAA+_ATPase"/>
</dbReference>
<dbReference type="InterPro" id="IPR003959">
    <property type="entry name" value="ATPase_AAA_core"/>
</dbReference>
<dbReference type="InterPro" id="IPR017730">
    <property type="entry name" value="Chaperonin_ClpB"/>
</dbReference>
<dbReference type="InterPro" id="IPR019489">
    <property type="entry name" value="Clp_ATPase_C"/>
</dbReference>
<dbReference type="InterPro" id="IPR036628">
    <property type="entry name" value="Clp_N_dom_sf"/>
</dbReference>
<dbReference type="InterPro" id="IPR004176">
    <property type="entry name" value="Clp_R_dom"/>
</dbReference>
<dbReference type="InterPro" id="IPR001270">
    <property type="entry name" value="ClpA/B"/>
</dbReference>
<dbReference type="InterPro" id="IPR018368">
    <property type="entry name" value="ClpA/B_CS1"/>
</dbReference>
<dbReference type="InterPro" id="IPR028299">
    <property type="entry name" value="ClpA/B_CS2"/>
</dbReference>
<dbReference type="InterPro" id="IPR041546">
    <property type="entry name" value="ClpA/ClpB_AAA_lid"/>
</dbReference>
<dbReference type="InterPro" id="IPR050130">
    <property type="entry name" value="ClpA_ClpB"/>
</dbReference>
<dbReference type="InterPro" id="IPR027417">
    <property type="entry name" value="P-loop_NTPase"/>
</dbReference>
<dbReference type="NCBIfam" id="TIGR03346">
    <property type="entry name" value="chaperone_ClpB"/>
    <property type="match status" value="1"/>
</dbReference>
<dbReference type="PANTHER" id="PTHR11638">
    <property type="entry name" value="ATP-DEPENDENT CLP PROTEASE"/>
    <property type="match status" value="1"/>
</dbReference>
<dbReference type="PANTHER" id="PTHR11638:SF18">
    <property type="entry name" value="HEAT SHOCK PROTEIN 104"/>
    <property type="match status" value="1"/>
</dbReference>
<dbReference type="Pfam" id="PF00004">
    <property type="entry name" value="AAA"/>
    <property type="match status" value="1"/>
</dbReference>
<dbReference type="Pfam" id="PF07724">
    <property type="entry name" value="AAA_2"/>
    <property type="match status" value="1"/>
</dbReference>
<dbReference type="Pfam" id="PF17871">
    <property type="entry name" value="AAA_lid_9"/>
    <property type="match status" value="1"/>
</dbReference>
<dbReference type="Pfam" id="PF02861">
    <property type="entry name" value="Clp_N"/>
    <property type="match status" value="2"/>
</dbReference>
<dbReference type="Pfam" id="PF10431">
    <property type="entry name" value="ClpB_D2-small"/>
    <property type="match status" value="1"/>
</dbReference>
<dbReference type="PRINTS" id="PR00300">
    <property type="entry name" value="CLPPROTEASEA"/>
</dbReference>
<dbReference type="SMART" id="SM00382">
    <property type="entry name" value="AAA"/>
    <property type="match status" value="2"/>
</dbReference>
<dbReference type="SMART" id="SM01086">
    <property type="entry name" value="ClpB_D2-small"/>
    <property type="match status" value="1"/>
</dbReference>
<dbReference type="SUPFAM" id="SSF81923">
    <property type="entry name" value="Double Clp-N motif"/>
    <property type="match status" value="1"/>
</dbReference>
<dbReference type="SUPFAM" id="SSF52540">
    <property type="entry name" value="P-loop containing nucleoside triphosphate hydrolases"/>
    <property type="match status" value="2"/>
</dbReference>
<dbReference type="PROSITE" id="PS51903">
    <property type="entry name" value="CLP_R"/>
    <property type="match status" value="1"/>
</dbReference>
<dbReference type="PROSITE" id="PS00870">
    <property type="entry name" value="CLPAB_1"/>
    <property type="match status" value="1"/>
</dbReference>
<dbReference type="PROSITE" id="PS00871">
    <property type="entry name" value="CLPAB_2"/>
    <property type="match status" value="1"/>
</dbReference>
<sequence length="860" mass="96325">MKLDKLTSKLNEAIYNAQASAEKLGNPEISEEHILKEVLSQPDGLVPLLISKLNLSPKSFLESTENALGKQPKVGGNTSADVGFSRSAVSLLKAADEVRKELKDEYLSTDHILLGLMKNGTGSLKTEFLKLGLEYHKLLKITLENRKGKTIMDDSPEGKTDALAKYAKNLNELAKQGKLDPVIGRDEEIRRTIQVLSRRTKNNPVLIGEPGVGKTAIVEGLANKIVQGEVPEGIKNKTLYTLDLGSMIAGAKYRGEFEDRLKALLDEVKSSDGEVILFIDEIHTLVGAGATEGALDASNMLKPMLARGELRCIGATTLKEYQKYIEKDAALERRFQPVYVKEPSVEETVTILRGLKGRYELHHGIRILDSALIAAATLSNRYISDRFLPDKAVDLIDEASSKMRIEIDSMPEELDRANKRIQSLKIEREALKKEQDTASKERLKTLERDLSEQEQNFQTLKARWDLEKSKIGRLKQIKEEIEKYKNLEAEAERRGEINRVAEIRYGKLVDLQKELESANEELKKQESASRLLKEEVSEEDIANIVSRWTGIPVSKMLQGERAKLLLMEDVLKTKVIGQDHALRLVSEAVQRSRAGIADPNRPIGTFLFLGPTGVGKTETAKALAEFLFDDVNAMTRIDMSEYMEAHSVARLIGAPPGYVGYDEGGQLTEAVRRRPYSLILFDEIEKANPEVFNIFLQILDEGRLTDGKGRNVDFKNTVIILTSNIGSEILGSSEYTSEEKERLVEQRLKKHFKPEFLNRIDEVILFHSITDSVIHKIADIQLEGLRQKAKENGLDVSFTNELKDYVSKAGFDAEYGARPLKRLIQREVGNALSRYILDGKFTNGQNVTVDYRQGKVVVVV</sequence>
<accession>Q72QU2</accession>
<organism>
    <name type="scientific">Leptospira interrogans serogroup Icterohaemorrhagiae serovar copenhageni (strain Fiocruz L1-130)</name>
    <dbReference type="NCBI Taxonomy" id="267671"/>
    <lineage>
        <taxon>Bacteria</taxon>
        <taxon>Pseudomonadati</taxon>
        <taxon>Spirochaetota</taxon>
        <taxon>Spirochaetia</taxon>
        <taxon>Leptospirales</taxon>
        <taxon>Leptospiraceae</taxon>
        <taxon>Leptospira</taxon>
    </lineage>
</organism>
<gene>
    <name type="primary">clpB</name>
    <name type="ordered locus">LIC_12017</name>
</gene>
<keyword id="KW-0067">ATP-binding</keyword>
<keyword id="KW-0143">Chaperone</keyword>
<keyword id="KW-0175">Coiled coil</keyword>
<keyword id="KW-0963">Cytoplasm</keyword>
<keyword id="KW-0547">Nucleotide-binding</keyword>
<keyword id="KW-0677">Repeat</keyword>
<keyword id="KW-0346">Stress response</keyword>
<comment type="function">
    <text evidence="1">Part of a stress-induced multi-chaperone system, it is involved in the recovery of the cell from heat-induced damage, in cooperation with DnaK, DnaJ and GrpE. Acts before DnaK, in the processing of protein aggregates. Protein binding stimulates the ATPase activity; ATP hydrolysis unfolds the denatured protein aggregates, which probably helps expose new hydrophobic binding sites on the surface of ClpB-bound aggregates, contributing to the solubilization and refolding of denatured protein aggregates by DnaK (By similarity).</text>
</comment>
<comment type="subunit">
    <text evidence="1">Homohexamer. The oligomerization is ATP-dependent (By similarity).</text>
</comment>
<comment type="subcellular location">
    <subcellularLocation>
        <location evidence="3">Cytoplasm</location>
    </subcellularLocation>
</comment>
<comment type="domain">
    <text evidence="1">The Clp repeat (R) domain probably functions as a substrate-discriminating domain, recruiting aggregated proteins to the ClpB hexamer and/or stabilizing bound proteins. The NBD2 domain is responsible for oligomerization, whereas the NBD1 domain stabilizes the hexamer probably in an ATP-dependent manner. The movement of the coiled-coil domain is essential for ClpB ability to rescue proteins from an aggregated state, probably by pulling apart large aggregated proteins, which are bound between the coiled-coils motifs of adjacent ClpB subunits in the functional hexamer (By similarity).</text>
</comment>
<comment type="similarity">
    <text evidence="3">Belongs to the ClpA/ClpB family.</text>
</comment>
<evidence type="ECO:0000250" key="1"/>
<evidence type="ECO:0000255" key="2">
    <source>
        <dbReference type="PROSITE-ProRule" id="PRU01251"/>
    </source>
</evidence>
<evidence type="ECO:0000305" key="3"/>
<protein>
    <recommendedName>
        <fullName>Chaperone protein ClpB</fullName>
    </recommendedName>
</protein>
<proteinExistence type="inferred from homology"/>
<feature type="chain" id="PRO_0000191133" description="Chaperone protein ClpB">
    <location>
        <begin position="1"/>
        <end position="860"/>
    </location>
</feature>
<feature type="domain" description="Clp R" evidence="2">
    <location>
        <begin position="3"/>
        <end position="148"/>
    </location>
</feature>
<feature type="region of interest" description="Repeat 1" evidence="2">
    <location>
        <begin position="6"/>
        <end position="71"/>
    </location>
</feature>
<feature type="region of interest" description="Repeat 2" evidence="2">
    <location>
        <begin position="84"/>
        <end position="148"/>
    </location>
</feature>
<feature type="region of interest" description="NBD1" evidence="1">
    <location>
        <begin position="161"/>
        <end position="342"/>
    </location>
</feature>
<feature type="region of interest" description="Linker" evidence="1">
    <location>
        <begin position="343"/>
        <end position="550"/>
    </location>
</feature>
<feature type="region of interest" description="NBD2" evidence="1">
    <location>
        <begin position="560"/>
        <end position="768"/>
    </location>
</feature>
<feature type="region of interest" description="C-terminal" evidence="1">
    <location>
        <begin position="769"/>
        <end position="860"/>
    </location>
</feature>
<feature type="coiled-coil region" evidence="1">
    <location>
        <begin position="393"/>
        <end position="527"/>
    </location>
</feature>
<feature type="binding site" evidence="1">
    <location>
        <begin position="208"/>
        <end position="215"/>
    </location>
    <ligand>
        <name>ATP</name>
        <dbReference type="ChEBI" id="CHEBI:30616"/>
        <label>1</label>
    </ligand>
</feature>
<feature type="binding site" evidence="1">
    <location>
        <begin position="610"/>
        <end position="617"/>
    </location>
    <ligand>
        <name>ATP</name>
        <dbReference type="ChEBI" id="CHEBI:30616"/>
        <label>2</label>
    </ligand>
</feature>
<reference key="1">
    <citation type="journal article" date="2004" name="J. Bacteriol.">
        <title>Comparative genomics of two Leptospira interrogans serovars reveals novel insights into physiology and pathogenesis.</title>
        <authorList>
            <person name="Nascimento A.L.T.O."/>
            <person name="Ko A.I."/>
            <person name="Martins E.A.L."/>
            <person name="Monteiro-Vitorello C.B."/>
            <person name="Ho P.L."/>
            <person name="Haake D.A."/>
            <person name="Verjovski-Almeida S."/>
            <person name="Hartskeerl R.A."/>
            <person name="Marques M.V."/>
            <person name="Oliveira M.C."/>
            <person name="Menck C.F.M."/>
            <person name="Leite L.C.C."/>
            <person name="Carrer H."/>
            <person name="Coutinho L.L."/>
            <person name="Degrave W.M."/>
            <person name="Dellagostin O.A."/>
            <person name="El-Dorry H."/>
            <person name="Ferro E.S."/>
            <person name="Ferro M.I.T."/>
            <person name="Furlan L.R."/>
            <person name="Gamberini M."/>
            <person name="Giglioti E.A."/>
            <person name="Goes-Neto A."/>
            <person name="Goldman G.H."/>
            <person name="Goldman M.H.S."/>
            <person name="Harakava R."/>
            <person name="Jeronimo S.M.B."/>
            <person name="Junqueira-de-Azevedo I.L.M."/>
            <person name="Kimura E.T."/>
            <person name="Kuramae E.E."/>
            <person name="Lemos E.G.M."/>
            <person name="Lemos M.V.F."/>
            <person name="Marino C.L."/>
            <person name="Nunes L.R."/>
            <person name="de Oliveira R.C."/>
            <person name="Pereira G.G."/>
            <person name="Reis M.S."/>
            <person name="Schriefer A."/>
            <person name="Siqueira W.J."/>
            <person name="Sommer P."/>
            <person name="Tsai S.M."/>
            <person name="Simpson A.J.G."/>
            <person name="Ferro J.A."/>
            <person name="Camargo L.E.A."/>
            <person name="Kitajima J.P."/>
            <person name="Setubal J.C."/>
            <person name="Van Sluys M.A."/>
        </authorList>
    </citation>
    <scope>NUCLEOTIDE SEQUENCE [LARGE SCALE GENOMIC DNA]</scope>
    <source>
        <strain>Fiocruz L1-130</strain>
    </source>
</reference>
<name>CLPB_LEPIC</name>